<sequence>MDAWAVQFGNASKVSPFEGEQYHIAPKWAFYLQAAFMGFVFIVGTPMNGIVLFVTMKYKKLRQPLNYILVNISLAGFIFDTFSVSQVFVCAARGYYFLGYTLCAMEAAMGSIAGLVTGWSLAVLAFERYVVICKPFGSFKFGQGQAVGAVVFTWIIGTACATPPFFGWSRYIPEGLGTACGPDWYTKSEEYNSESYTYFLLITCFMMPMTIIIFSYSQLLGALRAVAAQQAESESTQKAEREVSRMVVVMVGSFVLCYAPYAVTAMYFANSDEPNKDYRLVAIPAFFSKSSCVYNPLIYAFMNKQFNACIMETVFGKKIDESSEVSSKTETSSVSA</sequence>
<feature type="chain" id="PRO_0000197805" description="Opsin-1, short-wave-sensitive 1">
    <location>
        <begin position="1"/>
        <end position="336"/>
    </location>
</feature>
<feature type="topological domain" description="Extracellular" evidence="1">
    <location>
        <begin position="1"/>
        <end position="29"/>
    </location>
</feature>
<feature type="transmembrane region" description="Helical; Name=1" evidence="2">
    <location>
        <begin position="30"/>
        <end position="54"/>
    </location>
</feature>
<feature type="topological domain" description="Cytoplasmic" evidence="1">
    <location>
        <begin position="55"/>
        <end position="66"/>
    </location>
</feature>
<feature type="transmembrane region" description="Helical; Name=2" evidence="2">
    <location>
        <begin position="67"/>
        <end position="91"/>
    </location>
</feature>
<feature type="topological domain" description="Extracellular" evidence="1">
    <location>
        <begin position="92"/>
        <end position="106"/>
    </location>
</feature>
<feature type="transmembrane region" description="Helical; Name=3" evidence="2">
    <location>
        <begin position="107"/>
        <end position="126"/>
    </location>
</feature>
<feature type="topological domain" description="Cytoplasmic" evidence="1">
    <location>
        <begin position="127"/>
        <end position="145"/>
    </location>
</feature>
<feature type="transmembrane region" description="Helical; Name=4" evidence="2">
    <location>
        <begin position="146"/>
        <end position="169"/>
    </location>
</feature>
<feature type="topological domain" description="Extracellular" evidence="1">
    <location>
        <begin position="170"/>
        <end position="195"/>
    </location>
</feature>
<feature type="transmembrane region" description="Helical; Name=5" evidence="2">
    <location>
        <begin position="196"/>
        <end position="223"/>
    </location>
</feature>
<feature type="topological domain" description="Cytoplasmic" evidence="1">
    <location>
        <begin position="224"/>
        <end position="245"/>
    </location>
</feature>
<feature type="transmembrane region" description="Helical; Name=6" evidence="2">
    <location>
        <begin position="246"/>
        <end position="269"/>
    </location>
</feature>
<feature type="topological domain" description="Extracellular" evidence="1">
    <location>
        <begin position="270"/>
        <end position="277"/>
    </location>
</feature>
<feature type="transmembrane region" description="Helical; Name=7" evidence="2">
    <location>
        <begin position="278"/>
        <end position="302"/>
    </location>
</feature>
<feature type="topological domain" description="Cytoplasmic" evidence="1">
    <location>
        <begin position="303"/>
        <end position="336"/>
    </location>
</feature>
<feature type="modified residue" description="N6-(retinylidene)lysine" evidence="1">
    <location>
        <position position="289"/>
    </location>
</feature>
<feature type="glycosylation site" description="N-linked (GlcNAc...) asparagine" evidence="2">
    <location>
        <position position="10"/>
    </location>
</feature>
<feature type="disulfide bond" evidence="3">
    <location>
        <begin position="103"/>
        <end position="180"/>
    </location>
</feature>
<feature type="sequence conflict" description="In Ref. 1; AAD24756." evidence="6" ref="1">
    <original>F</original>
    <variation>S</variation>
    <location>
        <position position="88"/>
    </location>
</feature>
<feature type="sequence conflict" description="In Ref. 1; AAD24756." evidence="6" ref="1">
    <original>F</original>
    <variation>S</variation>
    <location>
        <position position="97"/>
    </location>
</feature>
<feature type="sequence conflict" description="In Ref. 1; AAD24756." evidence="6" ref="1">
    <original>A</original>
    <variation>S</variation>
    <location>
        <position position="104"/>
    </location>
</feature>
<feature type="sequence conflict" description="In Ref. 1; AAD24756." evidence="6" ref="1">
    <original>C</original>
    <variation>S</variation>
    <location>
        <position position="292"/>
    </location>
</feature>
<protein>
    <recommendedName>
        <fullName>Opsin-1, short-wave-sensitive 1</fullName>
        <shortName>Opsin SWS-1</shortName>
    </recommendedName>
    <alternativeName>
        <fullName>Ultraviolet cone photoreceptor pigment</fullName>
    </alternativeName>
    <alternativeName>
        <fullName>Ultraviolet-sensitive opsin</fullName>
    </alternativeName>
</protein>
<reference key="1">
    <citation type="journal article" date="1999" name="Vis. Neurosci.">
        <title>Cloning and characterization of six zebrafish photoreceptor opsin cDNAs and immunolocalization of their corresponding proteins.</title>
        <authorList>
            <person name="Vihtelic T.S."/>
            <person name="Doro C.J."/>
            <person name="Hyde D.R."/>
        </authorList>
    </citation>
    <scope>NUCLEOTIDE SEQUENCE [MRNA]</scope>
    <scope>TISSUE SPECIFICITY</scope>
    <source>
        <tissue>Eye</tissue>
    </source>
</reference>
<reference key="2">
    <citation type="journal article" date="2003" name="Genetics">
        <title>Gene duplication and spectral diversification of cone visual pigments of zebrafish.</title>
        <authorList>
            <person name="Chinen A."/>
            <person name="Hamaoka T."/>
            <person name="Yamada Y."/>
            <person name="Kawamura S."/>
        </authorList>
    </citation>
    <scope>NUCLEOTIDE SEQUENCE [GENOMIC DNA / MRNA]</scope>
    <scope>BIOPHYSICOCHEMICAL PROPERTIES</scope>
    <source>
        <strain>AB</strain>
        <tissue>Eye</tissue>
    </source>
</reference>
<evidence type="ECO:0000250" key="1"/>
<evidence type="ECO:0000255" key="2"/>
<evidence type="ECO:0000255" key="3">
    <source>
        <dbReference type="PROSITE-ProRule" id="PRU00521"/>
    </source>
</evidence>
<evidence type="ECO:0000269" key="4">
    <source>
    </source>
</evidence>
<evidence type="ECO:0000269" key="5">
    <source>
    </source>
</evidence>
<evidence type="ECO:0000305" key="6"/>
<accession>Q9W6A9</accession>
<accession>Q8AYM5</accession>
<proteinExistence type="evidence at protein level"/>
<gene>
    <name type="primary">opn1sw1</name>
    <name type="synonym">opn1sw2</name>
    <name type="synonym">sws1</name>
    <name type="synonym">uvops</name>
</gene>
<organism>
    <name type="scientific">Danio rerio</name>
    <name type="common">Zebrafish</name>
    <name type="synonym">Brachydanio rerio</name>
    <dbReference type="NCBI Taxonomy" id="7955"/>
    <lineage>
        <taxon>Eukaryota</taxon>
        <taxon>Metazoa</taxon>
        <taxon>Chordata</taxon>
        <taxon>Craniata</taxon>
        <taxon>Vertebrata</taxon>
        <taxon>Euteleostomi</taxon>
        <taxon>Actinopterygii</taxon>
        <taxon>Neopterygii</taxon>
        <taxon>Teleostei</taxon>
        <taxon>Ostariophysi</taxon>
        <taxon>Cypriniformes</taxon>
        <taxon>Danionidae</taxon>
        <taxon>Danioninae</taxon>
        <taxon>Danio</taxon>
    </lineage>
</organism>
<name>OP1S1_DANRE</name>
<dbReference type="EMBL" id="AF109373">
    <property type="protein sequence ID" value="AAD24756.1"/>
    <property type="molecule type" value="mRNA"/>
</dbReference>
<dbReference type="EMBL" id="AB087810">
    <property type="protein sequence ID" value="BAC24134.1"/>
    <property type="molecule type" value="Genomic_DNA"/>
</dbReference>
<dbReference type="RefSeq" id="NP_571394.1">
    <property type="nucleotide sequence ID" value="NM_131319.1"/>
</dbReference>
<dbReference type="SMR" id="Q9W6A9"/>
<dbReference type="FunCoup" id="Q9W6A9">
    <property type="interactions" value="47"/>
</dbReference>
<dbReference type="STRING" id="7955.ENSDARP00000067159"/>
<dbReference type="GlyCosmos" id="Q9W6A9">
    <property type="glycosylation" value="1 site, No reported glycans"/>
</dbReference>
<dbReference type="PaxDb" id="7955-ENSDARP00000067159"/>
<dbReference type="GeneID" id="30582"/>
<dbReference type="KEGG" id="dre:30582"/>
<dbReference type="AGR" id="ZFIN:ZDB-GENE-991109-25"/>
<dbReference type="CTD" id="30582"/>
<dbReference type="ZFIN" id="ZDB-GENE-991109-25">
    <property type="gene designation" value="opn1sw1"/>
</dbReference>
<dbReference type="eggNOG" id="KOG3656">
    <property type="taxonomic scope" value="Eukaryota"/>
</dbReference>
<dbReference type="InParanoid" id="Q9W6A9"/>
<dbReference type="OrthoDB" id="6142583at2759"/>
<dbReference type="PhylomeDB" id="Q9W6A9"/>
<dbReference type="Reactome" id="R-DRE-2187335">
    <property type="pathway name" value="The retinoid cycle in cones (daylight vision)"/>
</dbReference>
<dbReference type="Reactome" id="R-DRE-418594">
    <property type="pathway name" value="G alpha (i) signalling events"/>
</dbReference>
<dbReference type="Reactome" id="R-DRE-419771">
    <property type="pathway name" value="Opsins"/>
</dbReference>
<dbReference type="PRO" id="PR:Q9W6A9"/>
<dbReference type="Proteomes" id="UP000000437">
    <property type="component" value="Chromosome 4"/>
</dbReference>
<dbReference type="GO" id="GO:0001750">
    <property type="term" value="C:photoreceptor outer segment"/>
    <property type="evidence" value="ECO:0000318"/>
    <property type="project" value="GO_Central"/>
</dbReference>
<dbReference type="GO" id="GO:0005886">
    <property type="term" value="C:plasma membrane"/>
    <property type="evidence" value="ECO:0000318"/>
    <property type="project" value="GO_Central"/>
</dbReference>
<dbReference type="GO" id="GO:0008020">
    <property type="term" value="F:G protein-coupled photoreceptor activity"/>
    <property type="evidence" value="ECO:0000318"/>
    <property type="project" value="GO_Central"/>
</dbReference>
<dbReference type="GO" id="GO:0009881">
    <property type="term" value="F:photoreceptor activity"/>
    <property type="evidence" value="ECO:0000303"/>
    <property type="project" value="UniProtKB"/>
</dbReference>
<dbReference type="GO" id="GO:0071482">
    <property type="term" value="P:cellular response to light stimulus"/>
    <property type="evidence" value="ECO:0000318"/>
    <property type="project" value="GO_Central"/>
</dbReference>
<dbReference type="GO" id="GO:0007186">
    <property type="term" value="P:G protein-coupled receptor signaling pathway"/>
    <property type="evidence" value="ECO:0000318"/>
    <property type="project" value="GO_Central"/>
</dbReference>
<dbReference type="GO" id="GO:0007602">
    <property type="term" value="P:phototransduction"/>
    <property type="evidence" value="ECO:0000318"/>
    <property type="project" value="GO_Central"/>
</dbReference>
<dbReference type="GO" id="GO:0007601">
    <property type="term" value="P:visual perception"/>
    <property type="evidence" value="ECO:0000303"/>
    <property type="project" value="UniProtKB"/>
</dbReference>
<dbReference type="FunFam" id="1.20.1070.10:FF:000018">
    <property type="entry name" value="Rhodopsin"/>
    <property type="match status" value="1"/>
</dbReference>
<dbReference type="Gene3D" id="1.20.1070.10">
    <property type="entry name" value="Rhodopsin 7-helix transmembrane proteins"/>
    <property type="match status" value="1"/>
</dbReference>
<dbReference type="InterPro" id="IPR050125">
    <property type="entry name" value="GPCR_opsins"/>
</dbReference>
<dbReference type="InterPro" id="IPR000276">
    <property type="entry name" value="GPCR_Rhodpsn"/>
</dbReference>
<dbReference type="InterPro" id="IPR017452">
    <property type="entry name" value="GPCR_Rhodpsn_7TM"/>
</dbReference>
<dbReference type="InterPro" id="IPR001760">
    <property type="entry name" value="Opsin"/>
</dbReference>
<dbReference type="InterPro" id="IPR001521">
    <property type="entry name" value="Opsin_blue"/>
</dbReference>
<dbReference type="InterPro" id="IPR027430">
    <property type="entry name" value="Retinal_BS"/>
</dbReference>
<dbReference type="PANTHER" id="PTHR24240">
    <property type="entry name" value="OPSIN"/>
    <property type="match status" value="1"/>
</dbReference>
<dbReference type="Pfam" id="PF00001">
    <property type="entry name" value="7tm_1"/>
    <property type="match status" value="1"/>
</dbReference>
<dbReference type="PRINTS" id="PR00237">
    <property type="entry name" value="GPCRRHODOPSN"/>
</dbReference>
<dbReference type="PRINTS" id="PR00238">
    <property type="entry name" value="OPSIN"/>
</dbReference>
<dbReference type="PRINTS" id="PR00574">
    <property type="entry name" value="OPSINBLUE"/>
</dbReference>
<dbReference type="SUPFAM" id="SSF81321">
    <property type="entry name" value="Family A G protein-coupled receptor-like"/>
    <property type="match status" value="1"/>
</dbReference>
<dbReference type="PROSITE" id="PS00237">
    <property type="entry name" value="G_PROTEIN_RECEP_F1_1"/>
    <property type="match status" value="1"/>
</dbReference>
<dbReference type="PROSITE" id="PS50262">
    <property type="entry name" value="G_PROTEIN_RECEP_F1_2"/>
    <property type="match status" value="1"/>
</dbReference>
<dbReference type="PROSITE" id="PS00238">
    <property type="entry name" value="OPSIN"/>
    <property type="match status" value="1"/>
</dbReference>
<keyword id="KW-0157">Chromophore</keyword>
<keyword id="KW-1015">Disulfide bond</keyword>
<keyword id="KW-0297">G-protein coupled receptor</keyword>
<keyword id="KW-0325">Glycoprotein</keyword>
<keyword id="KW-0472">Membrane</keyword>
<keyword id="KW-0597">Phosphoprotein</keyword>
<keyword id="KW-0600">Photoreceptor protein</keyword>
<keyword id="KW-0675">Receptor</keyword>
<keyword id="KW-1185">Reference proteome</keyword>
<keyword id="KW-0681">Retinal protein</keyword>
<keyword id="KW-0716">Sensory transduction</keyword>
<keyword id="KW-0807">Transducer</keyword>
<keyword id="KW-0812">Transmembrane</keyword>
<keyword id="KW-1133">Transmembrane helix</keyword>
<keyword id="KW-0844">Vision</keyword>
<comment type="function">
    <text>Visual pigments are the light-absorbing molecules that mediate vision. They consist of an apoprotein, opsin, covalently linked to cis-retinal.</text>
</comment>
<comment type="biophysicochemical properties">
    <absorption>
        <max evidence="5">355 nm</max>
    </absorption>
</comment>
<comment type="subcellular location">
    <subcellularLocation>
        <location>Membrane</location>
        <topology>Multi-pass membrane protein</topology>
    </subcellularLocation>
</comment>
<comment type="tissue specificity">
    <text evidence="4">Retinal short single cones, outer and inner segments.</text>
</comment>
<comment type="PTM">
    <text evidence="1">Phosphorylated on some or all of the serine and threonine residues present in the C-terminal region.</text>
</comment>
<comment type="similarity">
    <text evidence="3">Belongs to the G-protein coupled receptor 1 family. Opsin subfamily.</text>
</comment>